<keyword id="KW-1015">Disulfide bond</keyword>
<keyword id="KW-0325">Glycoprotein</keyword>
<keyword id="KW-1185">Reference proteome</keyword>
<keyword id="KW-0732">Signal</keyword>
<sequence>MTKSIKRPPPFSCKQVLLTYVILAYTVAAHSSPPPCGLYGAPPCQFLPAPPGQTPTCARPGKTYCEHADNYPTYLIKSLVRKWGYEAATLLVDETWEDFAAVAWHDTPVFYDPKSIFPPRDPAAQDFNGYSYQTPFGGNPQRPSGGGNPLFVSNPSTEAPTYLLYTSSGGGHRSGHRYNSQGGGTSSSGGHLYINQSDKSTPYNATLWLKRLVRDLSRKQRQPDEVQAEVVEPVNEQTEEAEEQDNPAEDHPQSKRDVSLNMDLLDIVGVEAPNPLKKRSRTKRQSPGRSTLCQTTSQFITPQAALNSRGNWMFVVNEQNTARQMVKAELCASNTCSNLCELPNGYNSRCEQKFVQKRLIALQGNGQNLYTDTFWFPSCCVCTIAAN</sequence>
<reference evidence="13" key="1">
    <citation type="journal article" date="2000" name="Science">
        <title>The genome sequence of Drosophila melanogaster.</title>
        <authorList>
            <person name="Adams M.D."/>
            <person name="Celniker S.E."/>
            <person name="Holt R.A."/>
            <person name="Evans C.A."/>
            <person name="Gocayne J.D."/>
            <person name="Amanatides P.G."/>
            <person name="Scherer S.E."/>
            <person name="Li P.W."/>
            <person name="Hoskins R.A."/>
            <person name="Galle R.F."/>
            <person name="George R.A."/>
            <person name="Lewis S.E."/>
            <person name="Richards S."/>
            <person name="Ashburner M."/>
            <person name="Henderson S.N."/>
            <person name="Sutton G.G."/>
            <person name="Wortman J.R."/>
            <person name="Yandell M.D."/>
            <person name="Zhang Q."/>
            <person name="Chen L.X."/>
            <person name="Brandon R.C."/>
            <person name="Rogers Y.-H.C."/>
            <person name="Blazej R.G."/>
            <person name="Champe M."/>
            <person name="Pfeiffer B.D."/>
            <person name="Wan K.H."/>
            <person name="Doyle C."/>
            <person name="Baxter E.G."/>
            <person name="Helt G."/>
            <person name="Nelson C.R."/>
            <person name="Miklos G.L.G."/>
            <person name="Abril J.F."/>
            <person name="Agbayani A."/>
            <person name="An H.-J."/>
            <person name="Andrews-Pfannkoch C."/>
            <person name="Baldwin D."/>
            <person name="Ballew R.M."/>
            <person name="Basu A."/>
            <person name="Baxendale J."/>
            <person name="Bayraktaroglu L."/>
            <person name="Beasley E.M."/>
            <person name="Beeson K.Y."/>
            <person name="Benos P.V."/>
            <person name="Berman B.P."/>
            <person name="Bhandari D."/>
            <person name="Bolshakov S."/>
            <person name="Borkova D."/>
            <person name="Botchan M.R."/>
            <person name="Bouck J."/>
            <person name="Brokstein P."/>
            <person name="Brottier P."/>
            <person name="Burtis K.C."/>
            <person name="Busam D.A."/>
            <person name="Butler H."/>
            <person name="Cadieu E."/>
            <person name="Center A."/>
            <person name="Chandra I."/>
            <person name="Cherry J.M."/>
            <person name="Cawley S."/>
            <person name="Dahlke C."/>
            <person name="Davenport L.B."/>
            <person name="Davies P."/>
            <person name="de Pablos B."/>
            <person name="Delcher A."/>
            <person name="Deng Z."/>
            <person name="Mays A.D."/>
            <person name="Dew I."/>
            <person name="Dietz S.M."/>
            <person name="Dodson K."/>
            <person name="Doup L.E."/>
            <person name="Downes M."/>
            <person name="Dugan-Rocha S."/>
            <person name="Dunkov B.C."/>
            <person name="Dunn P."/>
            <person name="Durbin K.J."/>
            <person name="Evangelista C.C."/>
            <person name="Ferraz C."/>
            <person name="Ferriera S."/>
            <person name="Fleischmann W."/>
            <person name="Fosler C."/>
            <person name="Gabrielian A.E."/>
            <person name="Garg N.S."/>
            <person name="Gelbart W.M."/>
            <person name="Glasser K."/>
            <person name="Glodek A."/>
            <person name="Gong F."/>
            <person name="Gorrell J.H."/>
            <person name="Gu Z."/>
            <person name="Guan P."/>
            <person name="Harris M."/>
            <person name="Harris N.L."/>
            <person name="Harvey D.A."/>
            <person name="Heiman T.J."/>
            <person name="Hernandez J.R."/>
            <person name="Houck J."/>
            <person name="Hostin D."/>
            <person name="Houston K.A."/>
            <person name="Howland T.J."/>
            <person name="Wei M.-H."/>
            <person name="Ibegwam C."/>
            <person name="Jalali M."/>
            <person name="Kalush F."/>
            <person name="Karpen G.H."/>
            <person name="Ke Z."/>
            <person name="Kennison J.A."/>
            <person name="Ketchum K.A."/>
            <person name="Kimmel B.E."/>
            <person name="Kodira C.D."/>
            <person name="Kraft C.L."/>
            <person name="Kravitz S."/>
            <person name="Kulp D."/>
            <person name="Lai Z."/>
            <person name="Lasko P."/>
            <person name="Lei Y."/>
            <person name="Levitsky A.A."/>
            <person name="Li J.H."/>
            <person name="Li Z."/>
            <person name="Liang Y."/>
            <person name="Lin X."/>
            <person name="Liu X."/>
            <person name="Mattei B."/>
            <person name="McIntosh T.C."/>
            <person name="McLeod M.P."/>
            <person name="McPherson D."/>
            <person name="Merkulov G."/>
            <person name="Milshina N.V."/>
            <person name="Mobarry C."/>
            <person name="Morris J."/>
            <person name="Moshrefi A."/>
            <person name="Mount S.M."/>
            <person name="Moy M."/>
            <person name="Murphy B."/>
            <person name="Murphy L."/>
            <person name="Muzny D.M."/>
            <person name="Nelson D.L."/>
            <person name="Nelson D.R."/>
            <person name="Nelson K.A."/>
            <person name="Nixon K."/>
            <person name="Nusskern D.R."/>
            <person name="Pacleb J.M."/>
            <person name="Palazzolo M."/>
            <person name="Pittman G.S."/>
            <person name="Pan S."/>
            <person name="Pollard J."/>
            <person name="Puri V."/>
            <person name="Reese M.G."/>
            <person name="Reinert K."/>
            <person name="Remington K."/>
            <person name="Saunders R.D.C."/>
            <person name="Scheeler F."/>
            <person name="Shen H."/>
            <person name="Shue B.C."/>
            <person name="Siden-Kiamos I."/>
            <person name="Simpson M."/>
            <person name="Skupski M.P."/>
            <person name="Smith T.J."/>
            <person name="Spier E."/>
            <person name="Spradling A.C."/>
            <person name="Stapleton M."/>
            <person name="Strong R."/>
            <person name="Sun E."/>
            <person name="Svirskas R."/>
            <person name="Tector C."/>
            <person name="Turner R."/>
            <person name="Venter E."/>
            <person name="Wang A.H."/>
            <person name="Wang X."/>
            <person name="Wang Z.-Y."/>
            <person name="Wassarman D.A."/>
            <person name="Weinstock G.M."/>
            <person name="Weissenbach J."/>
            <person name="Williams S.M."/>
            <person name="Woodage T."/>
            <person name="Worley K.C."/>
            <person name="Wu D."/>
            <person name="Yang S."/>
            <person name="Yao Q.A."/>
            <person name="Ye J."/>
            <person name="Yeh R.-F."/>
            <person name="Zaveri J.S."/>
            <person name="Zhan M."/>
            <person name="Zhang G."/>
            <person name="Zhao Q."/>
            <person name="Zheng L."/>
            <person name="Zheng X.H."/>
            <person name="Zhong F.N."/>
            <person name="Zhong W."/>
            <person name="Zhou X."/>
            <person name="Zhu S.C."/>
            <person name="Zhu X."/>
            <person name="Smith H.O."/>
            <person name="Gibbs R.A."/>
            <person name="Myers E.W."/>
            <person name="Rubin G.M."/>
            <person name="Venter J.C."/>
        </authorList>
    </citation>
    <scope>NUCLEOTIDE SEQUENCE [LARGE SCALE GENOMIC DNA]</scope>
    <source>
        <strain>Berkeley</strain>
    </source>
</reference>
<reference evidence="13" key="2">
    <citation type="journal article" date="2002" name="Genome Biol.">
        <title>Annotation of the Drosophila melanogaster euchromatic genome: a systematic review.</title>
        <authorList>
            <person name="Misra S."/>
            <person name="Crosby M.A."/>
            <person name="Mungall C.J."/>
            <person name="Matthews B.B."/>
            <person name="Campbell K.S."/>
            <person name="Hradecky P."/>
            <person name="Huang Y."/>
            <person name="Kaminker J.S."/>
            <person name="Millburn G.H."/>
            <person name="Prochnik S.E."/>
            <person name="Smith C.D."/>
            <person name="Tupy J.L."/>
            <person name="Whitfield E.J."/>
            <person name="Bayraktaroglu L."/>
            <person name="Berman B.P."/>
            <person name="Bettencourt B.R."/>
            <person name="Celniker S.E."/>
            <person name="de Grey A.D.N.J."/>
            <person name="Drysdale R.A."/>
            <person name="Harris N.L."/>
            <person name="Richter J."/>
            <person name="Russo S."/>
            <person name="Schroeder A.J."/>
            <person name="Shu S.Q."/>
            <person name="Stapleton M."/>
            <person name="Yamada C."/>
            <person name="Ashburner M."/>
            <person name="Gelbart W.M."/>
            <person name="Rubin G.M."/>
            <person name="Lewis S.E."/>
        </authorList>
    </citation>
    <scope>GENOME REANNOTATION</scope>
    <source>
        <strain evidence="13">Berkeley</strain>
    </source>
</reference>
<reference evidence="11" key="3">
    <citation type="submission" date="2001-08" db="EMBL/GenBank/DDBJ databases">
        <authorList>
            <person name="Stapleton M."/>
            <person name="Brokstein P."/>
            <person name="Hong L."/>
            <person name="Agbayani A."/>
            <person name="Carlson J."/>
            <person name="Champe M."/>
            <person name="Chavez C."/>
            <person name="Dorsett V."/>
            <person name="Farfan D."/>
            <person name="Frise E."/>
            <person name="George R."/>
            <person name="Gonzalez M."/>
            <person name="Guarin H."/>
            <person name="Li P."/>
            <person name="Liao G."/>
            <person name="Miranda A."/>
            <person name="Mungall C.J."/>
            <person name="Nunoo J."/>
            <person name="Pacleb J."/>
            <person name="Paragas V."/>
            <person name="Park S."/>
            <person name="Phouanenavong S."/>
            <person name="Wan K."/>
            <person name="Yu C."/>
            <person name="Lewis S.E."/>
            <person name="Rubin G.M."/>
            <person name="Celniker S."/>
        </authorList>
    </citation>
    <scope>NUCLEOTIDE SEQUENCE [LARGE SCALE MRNA]</scope>
    <source>
        <strain evidence="11">Berkeley</strain>
        <tissue evidence="11">Embryo</tissue>
    </source>
</reference>
<reference evidence="10" key="4">
    <citation type="journal article" date="2001" name="Proteins">
        <title>A family of proteins related to Spaetzle, the toll receptor ligand, are encoded in the Drosophila genome.</title>
        <authorList>
            <person name="Parker J.S."/>
            <person name="Mizuguchi K."/>
            <person name="Gay N.J."/>
        </authorList>
    </citation>
    <scope>IDENTIFICATION</scope>
</reference>
<reference evidence="10" key="5">
    <citation type="journal article" date="2008" name="PLoS Biol.">
        <title>Drosophila neurotrophins reveal a common mechanism for nervous system formation.</title>
        <authorList>
            <person name="Zhu B."/>
            <person name="Pennack J.A."/>
            <person name="McQuilton P."/>
            <person name="Forero M.G."/>
            <person name="Mizuguchi K."/>
            <person name="Sutcliffe B."/>
            <person name="Gu C.-J."/>
            <person name="Fenton J.C."/>
            <person name="Hidalgo A."/>
        </authorList>
    </citation>
    <scope>FUNCTION</scope>
    <scope>DEVELOPMENTAL STAGE</scope>
</reference>
<reference evidence="10" key="6">
    <citation type="journal article" date="2013" name="Nat. Neurosci.">
        <title>Toll-6 and Toll-7 function as neurotrophin receptors in the Drosophila melanogaster CNS.</title>
        <authorList>
            <person name="McIlroy G."/>
            <person name="Foldi I."/>
            <person name="Aurikko J."/>
            <person name="Wentzell J.S."/>
            <person name="Lim M.A."/>
            <person name="Fenton J.C."/>
            <person name="Gay N.J."/>
            <person name="Hidalgo A."/>
        </authorList>
    </citation>
    <scope>FUNCTION</scope>
    <scope>TISSUE SPECIFICITY</scope>
    <scope>DEVELOPMENTAL STAGE</scope>
    <scope>MASS SPECTROMETRY</scope>
</reference>
<reference evidence="10" key="7">
    <citation type="journal article" date="2013" name="PLoS ONE">
        <title>Neuron-type specific functions of DNT1, DNT2 and Spz at the Drosophila neuromuscular junction.</title>
        <authorList>
            <person name="Sutcliffe B."/>
            <person name="Forero M.G."/>
            <person name="Zhu B."/>
            <person name="Robinson I.M."/>
            <person name="Hidalgo A."/>
        </authorList>
    </citation>
    <scope>FUNCTION</scope>
    <scope>DEVELOPMENTAL STAGE</scope>
</reference>
<organism evidence="13">
    <name type="scientific">Drosophila melanogaster</name>
    <name type="common">Fruit fly</name>
    <dbReference type="NCBI Taxonomy" id="7227"/>
    <lineage>
        <taxon>Eukaryota</taxon>
        <taxon>Metazoa</taxon>
        <taxon>Ecdysozoa</taxon>
        <taxon>Arthropoda</taxon>
        <taxon>Hexapoda</taxon>
        <taxon>Insecta</taxon>
        <taxon>Pterygota</taxon>
        <taxon>Neoptera</taxon>
        <taxon>Endopterygota</taxon>
        <taxon>Diptera</taxon>
        <taxon>Brachycera</taxon>
        <taxon>Muscomorpha</taxon>
        <taxon>Ephydroidea</taxon>
        <taxon>Drosophilidae</taxon>
        <taxon>Drosophila</taxon>
        <taxon>Sophophora</taxon>
    </lineage>
</organism>
<name>SPZ5_DROME</name>
<comment type="function">
    <text evidence="5 6 7">Neurotrophin which may function as a ligand for the Toll-related receptors Toll-6 and Toll-7 (PubMed:23892553). Binds to Toll-7 and Toll-6, and probably acts as their ligands in the promotion of motor axon targeting and neuronal survival in the central nervous system (CNS) (PubMed:19018662, PubMed:23892553). Involved in synaptic targeting of ISNb/d motorneurons and also some SNa motorneurons (PubMed:19018662). May be involved in the normal development of specific neurons at the neuromuscular junction (PubMed:24124519).</text>
</comment>
<comment type="subunit">
    <text evidence="1">Homodimer; disulfide-linked.</text>
</comment>
<comment type="tissue specificity">
    <text evidence="6">Detected in the fan-shaped body which is a component of the locomotion center in the central nervous system (CNS) (at protein level).</text>
</comment>
<comment type="developmental stage">
    <text evidence="5 6 7">In larvae, expressed in a punctate pattern along the CNS axons (at protein level) (PubMed:23892553). Expressed in larval body wall muscles and in the synaptic boutons (PubMed:24124519). In embryos, expressed in the CNS midline and muscles (PubMed:19018662).</text>
</comment>
<comment type="miscellaneous">
    <text evidence="10">'Spaetzle' means 'noodles' in German.</text>
</comment>
<proteinExistence type="evidence at protein level"/>
<gene>
    <name evidence="12" type="primary">spz5</name>
    <name evidence="8" type="synonym">DNT1</name>
    <name evidence="8" type="synonym">NT2</name>
    <name evidence="12" type="ORF">CG9972</name>
</gene>
<feature type="signal peptide" evidence="9">
    <location>
        <begin position="1"/>
        <end position="29"/>
    </location>
</feature>
<feature type="propeptide" id="PRO_0000437523" evidence="9">
    <location>
        <begin position="30"/>
        <end position="284"/>
    </location>
</feature>
<feature type="chain" id="PRO_5007325435" description="Protein spaetzle 5" evidence="10">
    <location>
        <begin position="285"/>
        <end position="387"/>
    </location>
</feature>
<feature type="domain" description="Spaetzle" evidence="2">
    <location>
        <begin position="291"/>
        <end position="384"/>
    </location>
</feature>
<feature type="region of interest" description="Disordered" evidence="4">
    <location>
        <begin position="133"/>
        <end position="197"/>
    </location>
</feature>
<feature type="region of interest" description="Disordered" evidence="4">
    <location>
        <begin position="219"/>
        <end position="256"/>
    </location>
</feature>
<feature type="region of interest" description="Disordered" evidence="4">
    <location>
        <begin position="269"/>
        <end position="291"/>
    </location>
</feature>
<feature type="compositionally biased region" description="Acidic residues" evidence="4">
    <location>
        <begin position="237"/>
        <end position="247"/>
    </location>
</feature>
<feature type="compositionally biased region" description="Basic residues" evidence="4">
    <location>
        <begin position="276"/>
        <end position="286"/>
    </location>
</feature>
<feature type="glycosylation site" description="N-linked (GlcNAc...) asparagine" evidence="3">
    <location>
        <position position="195"/>
    </location>
</feature>
<feature type="glycosylation site" description="N-linked (GlcNAc...) asparagine" evidence="3">
    <location>
        <position position="204"/>
    </location>
</feature>
<feature type="disulfide bond" evidence="1">
    <location>
        <begin position="293"/>
        <end position="350"/>
    </location>
</feature>
<feature type="disulfide bond" evidence="1">
    <location>
        <begin position="331"/>
        <end position="380"/>
    </location>
</feature>
<feature type="disulfide bond" evidence="1">
    <location>
        <begin position="340"/>
        <end position="382"/>
    </location>
</feature>
<feature type="disulfide bond" description="Interchain" evidence="1">
    <location>
        <position position="379"/>
    </location>
</feature>
<accession>Q9VZX1</accession>
<protein>
    <recommendedName>
        <fullName evidence="10">Protein spaetzle 5</fullName>
    </recommendedName>
    <alternativeName>
        <fullName evidence="10">Neurotrophic factor 2</fullName>
    </alternativeName>
    <alternativeName>
        <fullName evidence="12">Protein spatzle 5</fullName>
    </alternativeName>
</protein>
<dbReference type="EMBL" id="AE014296">
    <property type="protein sequence ID" value="AAF47694.1"/>
    <property type="molecule type" value="Genomic_DNA"/>
</dbReference>
<dbReference type="EMBL" id="AY051735">
    <property type="protein sequence ID" value="AAK93159.1"/>
    <property type="molecule type" value="mRNA"/>
</dbReference>
<dbReference type="RefSeq" id="NP_647753.1">
    <property type="nucleotide sequence ID" value="NM_139496.3"/>
</dbReference>
<dbReference type="FunCoup" id="Q9VZX1">
    <property type="interactions" value="135"/>
</dbReference>
<dbReference type="IntAct" id="Q9VZX1">
    <property type="interactions" value="1"/>
</dbReference>
<dbReference type="STRING" id="7227.FBpp0072881"/>
<dbReference type="GlyCosmos" id="Q9VZX1">
    <property type="glycosylation" value="2 sites, No reported glycans"/>
</dbReference>
<dbReference type="GlyGen" id="Q9VZX1">
    <property type="glycosylation" value="2 sites"/>
</dbReference>
<dbReference type="PaxDb" id="7227-FBpp0072881"/>
<dbReference type="DNASU" id="38350"/>
<dbReference type="EnsemblMetazoa" id="FBtr0073011">
    <property type="protein sequence ID" value="FBpp0072881"/>
    <property type="gene ID" value="FBgn0035379"/>
</dbReference>
<dbReference type="GeneID" id="38350"/>
<dbReference type="KEGG" id="dme:Dmel_CG9972"/>
<dbReference type="UCSC" id="CG9972-RA">
    <property type="organism name" value="d. melanogaster"/>
</dbReference>
<dbReference type="AGR" id="FB:FBgn0035379"/>
<dbReference type="CTD" id="38350"/>
<dbReference type="FlyBase" id="FBgn0035379">
    <property type="gene designation" value="spz5"/>
</dbReference>
<dbReference type="VEuPathDB" id="VectorBase:FBgn0035379"/>
<dbReference type="eggNOG" id="ENOG502S37H">
    <property type="taxonomic scope" value="Eukaryota"/>
</dbReference>
<dbReference type="GeneTree" id="ENSGT00700000106225"/>
<dbReference type="HOGENOM" id="CLU_043206_0_0_1"/>
<dbReference type="InParanoid" id="Q9VZX1"/>
<dbReference type="OMA" id="DTPVFYD"/>
<dbReference type="OrthoDB" id="7933576at2759"/>
<dbReference type="PhylomeDB" id="Q9VZX1"/>
<dbReference type="BioGRID-ORCS" id="38350">
    <property type="hits" value="0 hits in 1 CRISPR screen"/>
</dbReference>
<dbReference type="ChiTaRS" id="NT1">
    <property type="organism name" value="fly"/>
</dbReference>
<dbReference type="GenomeRNAi" id="38350"/>
<dbReference type="PRO" id="PR:Q9VZX1"/>
<dbReference type="Proteomes" id="UP000000803">
    <property type="component" value="Chromosome 3L"/>
</dbReference>
<dbReference type="Bgee" id="FBgn0035379">
    <property type="expression patterns" value="Expressed in tormogen cell in proboscis and 29 other cell types or tissues"/>
</dbReference>
<dbReference type="GO" id="GO:0005576">
    <property type="term" value="C:extracellular region"/>
    <property type="evidence" value="ECO:0000318"/>
    <property type="project" value="GO_Central"/>
</dbReference>
<dbReference type="GO" id="GO:0005615">
    <property type="term" value="C:extracellular space"/>
    <property type="evidence" value="ECO:0000314"/>
    <property type="project" value="FlyBase"/>
</dbReference>
<dbReference type="GO" id="GO:0008083">
    <property type="term" value="F:growth factor activity"/>
    <property type="evidence" value="ECO:0000315"/>
    <property type="project" value="FlyBase"/>
</dbReference>
<dbReference type="GO" id="GO:0048018">
    <property type="term" value="F:receptor ligand activity"/>
    <property type="evidence" value="ECO:0000314"/>
    <property type="project" value="FlyBase"/>
</dbReference>
<dbReference type="GO" id="GO:0005121">
    <property type="term" value="F:Toll binding"/>
    <property type="evidence" value="ECO:0000314"/>
    <property type="project" value="FlyBase"/>
</dbReference>
<dbReference type="GO" id="GO:0021556">
    <property type="term" value="P:central nervous system formation"/>
    <property type="evidence" value="ECO:0000315"/>
    <property type="project" value="FlyBase"/>
</dbReference>
<dbReference type="GO" id="GO:0045087">
    <property type="term" value="P:innate immune response"/>
    <property type="evidence" value="ECO:0000315"/>
    <property type="project" value="FlyBase"/>
</dbReference>
<dbReference type="GO" id="GO:0008045">
    <property type="term" value="P:motor neuron axon guidance"/>
    <property type="evidence" value="ECO:0000315"/>
    <property type="project" value="FlyBase"/>
</dbReference>
<dbReference type="GO" id="GO:0043524">
    <property type="term" value="P:negative regulation of neuron apoptotic process"/>
    <property type="evidence" value="ECO:0000316"/>
    <property type="project" value="FlyBase"/>
</dbReference>
<dbReference type="GO" id="GO:0002225">
    <property type="term" value="P:positive regulation of antimicrobial peptide production"/>
    <property type="evidence" value="ECO:0000315"/>
    <property type="project" value="FlyBase"/>
</dbReference>
<dbReference type="GO" id="GO:0031637">
    <property type="term" value="P:regulation of neuronal synaptic plasticity in response to neurotrophin"/>
    <property type="evidence" value="ECO:0000315"/>
    <property type="project" value="FlyBase"/>
</dbReference>
<dbReference type="GO" id="GO:0048167">
    <property type="term" value="P:regulation of synaptic plasticity"/>
    <property type="evidence" value="ECO:0000316"/>
    <property type="project" value="FlyBase"/>
</dbReference>
<dbReference type="GO" id="GO:0008063">
    <property type="term" value="P:Toll signaling pathway"/>
    <property type="evidence" value="ECO:0000314"/>
    <property type="project" value="FlyBase"/>
</dbReference>
<dbReference type="FunFam" id="2.10.90.10:FF:000018">
    <property type="entry name" value="Spatzle 4"/>
    <property type="match status" value="1"/>
</dbReference>
<dbReference type="Gene3D" id="2.10.90.10">
    <property type="entry name" value="Cystine-knot cytokines"/>
    <property type="match status" value="1"/>
</dbReference>
<dbReference type="InterPro" id="IPR029034">
    <property type="entry name" value="Cystine-knot_cytokine"/>
</dbReference>
<dbReference type="InterPro" id="IPR032104">
    <property type="entry name" value="Spaetzle"/>
</dbReference>
<dbReference type="InterPro" id="IPR052444">
    <property type="entry name" value="Spz/Toll_ligand-like"/>
</dbReference>
<dbReference type="PANTHER" id="PTHR23199">
    <property type="entry name" value="NEUROTROPHIN 1-RELATED"/>
    <property type="match status" value="1"/>
</dbReference>
<dbReference type="PANTHER" id="PTHR23199:SF16">
    <property type="entry name" value="PROTEIN SPAETZLE 5"/>
    <property type="match status" value="1"/>
</dbReference>
<dbReference type="Pfam" id="PF16077">
    <property type="entry name" value="Spaetzle"/>
    <property type="match status" value="1"/>
</dbReference>
<dbReference type="SUPFAM" id="SSF57501">
    <property type="entry name" value="Cystine-knot cytokines"/>
    <property type="match status" value="1"/>
</dbReference>
<evidence type="ECO:0000250" key="1">
    <source>
        <dbReference type="UniProtKB" id="P48607"/>
    </source>
</evidence>
<evidence type="ECO:0000255" key="2"/>
<evidence type="ECO:0000255" key="3">
    <source>
        <dbReference type="PROSITE-ProRule" id="PRU00498"/>
    </source>
</evidence>
<evidence type="ECO:0000256" key="4">
    <source>
        <dbReference type="SAM" id="MobiDB-lite"/>
    </source>
</evidence>
<evidence type="ECO:0000269" key="5">
    <source>
    </source>
</evidence>
<evidence type="ECO:0000269" key="6">
    <source>
    </source>
</evidence>
<evidence type="ECO:0000269" key="7">
    <source>
    </source>
</evidence>
<evidence type="ECO:0000303" key="8">
    <source>
    </source>
</evidence>
<evidence type="ECO:0000303" key="9">
    <source>
    </source>
</evidence>
<evidence type="ECO:0000305" key="10"/>
<evidence type="ECO:0000312" key="11">
    <source>
        <dbReference type="EMBL" id="AAK93159.1"/>
    </source>
</evidence>
<evidence type="ECO:0000312" key="12">
    <source>
        <dbReference type="FlyBase" id="FBgn0035379"/>
    </source>
</evidence>
<evidence type="ECO:0000312" key="13">
    <source>
        <dbReference type="Proteomes" id="UP000000803"/>
    </source>
</evidence>